<accession>Q8WYP3</accession>
<accession>Q00425</accession>
<accession>Q5TFT8</accession>
<accession>Q9BQL3</accession>
<accession>Q9H071</accession>
<evidence type="ECO:0000250" key="1">
    <source>
        <dbReference type="UniProtKB" id="Q9D684"/>
    </source>
</evidence>
<evidence type="ECO:0000255" key="2">
    <source>
        <dbReference type="PROSITE-ProRule" id="PRU00166"/>
    </source>
</evidence>
<evidence type="ECO:0000255" key="3">
    <source>
        <dbReference type="PROSITE-ProRule" id="PRU00191"/>
    </source>
</evidence>
<evidence type="ECO:0000255" key="4">
    <source>
        <dbReference type="PROSITE-ProRule" id="PRU00550"/>
    </source>
</evidence>
<evidence type="ECO:0000256" key="5">
    <source>
        <dbReference type="SAM" id="MobiDB-lite"/>
    </source>
</evidence>
<evidence type="ECO:0000269" key="6">
    <source>
    </source>
</evidence>
<evidence type="ECO:0000269" key="7">
    <source>
    </source>
</evidence>
<evidence type="ECO:0000269" key="8">
    <source>
    </source>
</evidence>
<evidence type="ECO:0000269" key="9">
    <source>
    </source>
</evidence>
<evidence type="ECO:0000303" key="10">
    <source>
    </source>
</evidence>
<evidence type="ECO:0000305" key="11"/>
<evidence type="ECO:0007744" key="12">
    <source>
    </source>
</evidence>
<organism>
    <name type="scientific">Homo sapiens</name>
    <name type="common">Human</name>
    <dbReference type="NCBI Taxonomy" id="9606"/>
    <lineage>
        <taxon>Eukaryota</taxon>
        <taxon>Metazoa</taxon>
        <taxon>Chordata</taxon>
        <taxon>Craniata</taxon>
        <taxon>Vertebrata</taxon>
        <taxon>Euteleostomi</taxon>
        <taxon>Mammalia</taxon>
        <taxon>Eutheria</taxon>
        <taxon>Euarchontoglires</taxon>
        <taxon>Primates</taxon>
        <taxon>Haplorrhini</taxon>
        <taxon>Catarrhini</taxon>
        <taxon>Hominidae</taxon>
        <taxon>Homo</taxon>
    </lineage>
</organism>
<sequence length="895" mass="100163">MTAWTMGARGLDKRGSFFKLIDTIASEIGELKQEMVRTDVNLENGLEPAETHSMVRHKDGGYSEEEDVKTCARDSGYDSLSNRLSILDRLLHTHPIWLQLSLSEEEAAEVLQAQPPGIFLVHKSTKMQKKVLSLRLPCEFGAPLKEFAIKESTYTFSLEGSGISFADLFRLIAFYCISRDVLPFTLKLPYAISTAKSEAQLEELAQMGLNFWSSPADSKPPNLPPPHRPLSSDGVCPASLRQLCLINGVHSIKTRTPSELECSQTNGALCFINPLFLKVHSQDLSGGLKRPSTRTPNANGTERTRSPPPRPPPPAINSLHTSPRLARTETQTSMPETVNHNKHGNVALPGTKPTPIPPPRLKKQASFLEAEGGAKTLSGGRPGAGPELELGTAGSPGGAPPEAAPGDCTRAPPPSSESRPPCHGGRQRLSDMSISTSSSDSLEFDRSMPLFGYEADTNSSLEDYEGESDQETMAPPIKSKKKRSSSFVLPKLVKSQLQKVSGVFSSFMTPEKRMVRRIAELSRDKCTYFGCLVQDYVSFLQENKECHVSSTDMLQTIRQFMTQVKNYLSQSSELDPPIESLIPEDQIDVVLEKAMHKCILKPLKGHVEAMLKDFHMADGSWKQLKENLQLVRQRNPQELGVFAPTPDFVDVEKIKVKFMTMQKMYSPEKKVMLLLRVCKLIYTVMENNSGRMYGADDFLPVLTYVIAQCDMLELDTEIEYMMELLDPSLLHGEGGYYLTSAYGALSLIKNFQEEQAARLLSSETRDTLRQWHKRRTTNRTIPSVDDFQNYLRVAFQEVNSGCTGKTLLVRPYITTEDVCQICAEKFKVGDPEEYSLFLFVDETWQQLAEDTYPQKIKAELHSRPQPHIFHFVYKRIKNDPYGIIFQNGEEDLTTS</sequence>
<protein>
    <recommendedName>
        <fullName>Ras and Rab interactor 2</fullName>
    </recommendedName>
    <alternativeName>
        <fullName>Ras association domain family 4</fullName>
    </alternativeName>
    <alternativeName>
        <fullName>Ras inhibitor JC265</fullName>
    </alternativeName>
    <alternativeName>
        <fullName>Ras interaction/interference protein 2</fullName>
    </alternativeName>
</protein>
<reference key="1">
    <citation type="journal article" date="2002" name="J. Biol. Chem.">
        <title>A novel binding protein composed of homophilic tetramer exhibits unique properties for the small GTPase Rab5.</title>
        <authorList>
            <person name="Saito K."/>
            <person name="Murai J."/>
            <person name="Kajiho H."/>
            <person name="Kontani K."/>
            <person name="Kurosu H."/>
            <person name="Katada T."/>
        </authorList>
    </citation>
    <scope>NUCLEOTIDE SEQUENCE [MRNA] (ISOFORM 1)</scope>
    <scope>TISSUE SPECIFICITY</scope>
    <scope>FUNCTION</scope>
    <scope>INTERACTION WITH RAB5B</scope>
    <source>
        <tissue>Leukocyte</tissue>
    </source>
</reference>
<reference key="2">
    <citation type="journal article" date="2001" name="Nature">
        <title>The DNA sequence and comparative analysis of human chromosome 20.</title>
        <authorList>
            <person name="Deloukas P."/>
            <person name="Matthews L.H."/>
            <person name="Ashurst J.L."/>
            <person name="Burton J."/>
            <person name="Gilbert J.G.R."/>
            <person name="Jones M."/>
            <person name="Stavrides G."/>
            <person name="Almeida J.P."/>
            <person name="Babbage A.K."/>
            <person name="Bagguley C.L."/>
            <person name="Bailey J."/>
            <person name="Barlow K.F."/>
            <person name="Bates K.N."/>
            <person name="Beard L.M."/>
            <person name="Beare D.M."/>
            <person name="Beasley O.P."/>
            <person name="Bird C.P."/>
            <person name="Blakey S.E."/>
            <person name="Bridgeman A.M."/>
            <person name="Brown A.J."/>
            <person name="Buck D."/>
            <person name="Burrill W.D."/>
            <person name="Butler A.P."/>
            <person name="Carder C."/>
            <person name="Carter N.P."/>
            <person name="Chapman J.C."/>
            <person name="Clamp M."/>
            <person name="Clark G."/>
            <person name="Clark L.N."/>
            <person name="Clark S.Y."/>
            <person name="Clee C.M."/>
            <person name="Clegg S."/>
            <person name="Cobley V.E."/>
            <person name="Collier R.E."/>
            <person name="Connor R.E."/>
            <person name="Corby N.R."/>
            <person name="Coulson A."/>
            <person name="Coville G.J."/>
            <person name="Deadman R."/>
            <person name="Dhami P.D."/>
            <person name="Dunn M."/>
            <person name="Ellington A.G."/>
            <person name="Frankland J.A."/>
            <person name="Fraser A."/>
            <person name="French L."/>
            <person name="Garner P."/>
            <person name="Grafham D.V."/>
            <person name="Griffiths C."/>
            <person name="Griffiths M.N.D."/>
            <person name="Gwilliam R."/>
            <person name="Hall R.E."/>
            <person name="Hammond S."/>
            <person name="Harley J.L."/>
            <person name="Heath P.D."/>
            <person name="Ho S."/>
            <person name="Holden J.L."/>
            <person name="Howden P.J."/>
            <person name="Huckle E."/>
            <person name="Hunt A.R."/>
            <person name="Hunt S.E."/>
            <person name="Jekosch K."/>
            <person name="Johnson C.M."/>
            <person name="Johnson D."/>
            <person name="Kay M.P."/>
            <person name="Kimberley A.M."/>
            <person name="King A."/>
            <person name="Knights A."/>
            <person name="Laird G.K."/>
            <person name="Lawlor S."/>
            <person name="Lehvaeslaiho M.H."/>
            <person name="Leversha M.A."/>
            <person name="Lloyd C."/>
            <person name="Lloyd D.M."/>
            <person name="Lovell J.D."/>
            <person name="Marsh V.L."/>
            <person name="Martin S.L."/>
            <person name="McConnachie L.J."/>
            <person name="McLay K."/>
            <person name="McMurray A.A."/>
            <person name="Milne S.A."/>
            <person name="Mistry D."/>
            <person name="Moore M.J.F."/>
            <person name="Mullikin J.C."/>
            <person name="Nickerson T."/>
            <person name="Oliver K."/>
            <person name="Parker A."/>
            <person name="Patel R."/>
            <person name="Pearce T.A.V."/>
            <person name="Peck A.I."/>
            <person name="Phillimore B.J.C.T."/>
            <person name="Prathalingam S.R."/>
            <person name="Plumb R.W."/>
            <person name="Ramsay H."/>
            <person name="Rice C.M."/>
            <person name="Ross M.T."/>
            <person name="Scott C.E."/>
            <person name="Sehra H.K."/>
            <person name="Shownkeen R."/>
            <person name="Sims S."/>
            <person name="Skuce C.D."/>
            <person name="Smith M.L."/>
            <person name="Soderlund C."/>
            <person name="Steward C.A."/>
            <person name="Sulston J.E."/>
            <person name="Swann R.M."/>
            <person name="Sycamore N."/>
            <person name="Taylor R."/>
            <person name="Tee L."/>
            <person name="Thomas D.W."/>
            <person name="Thorpe A."/>
            <person name="Tracey A."/>
            <person name="Tromans A.C."/>
            <person name="Vaudin M."/>
            <person name="Wall M."/>
            <person name="Wallis J.M."/>
            <person name="Whitehead S.L."/>
            <person name="Whittaker P."/>
            <person name="Willey D.L."/>
            <person name="Williams L."/>
            <person name="Williams S.A."/>
            <person name="Wilming L."/>
            <person name="Wray P.W."/>
            <person name="Hubbard T."/>
            <person name="Durbin R.M."/>
            <person name="Bentley D.R."/>
            <person name="Beck S."/>
            <person name="Rogers J."/>
        </authorList>
    </citation>
    <scope>NUCLEOTIDE SEQUENCE [LARGE SCALE GENOMIC DNA]</scope>
</reference>
<reference key="3">
    <citation type="journal article" date="2004" name="Nat. Genet.">
        <title>Complete sequencing and characterization of 21,243 full-length human cDNAs.</title>
        <authorList>
            <person name="Ota T."/>
            <person name="Suzuki Y."/>
            <person name="Nishikawa T."/>
            <person name="Otsuki T."/>
            <person name="Sugiyama T."/>
            <person name="Irie R."/>
            <person name="Wakamatsu A."/>
            <person name="Hayashi K."/>
            <person name="Sato H."/>
            <person name="Nagai K."/>
            <person name="Kimura K."/>
            <person name="Makita H."/>
            <person name="Sekine M."/>
            <person name="Obayashi M."/>
            <person name="Nishi T."/>
            <person name="Shibahara T."/>
            <person name="Tanaka T."/>
            <person name="Ishii S."/>
            <person name="Yamamoto J."/>
            <person name="Saito K."/>
            <person name="Kawai Y."/>
            <person name="Isono Y."/>
            <person name="Nakamura Y."/>
            <person name="Nagahari K."/>
            <person name="Murakami K."/>
            <person name="Yasuda T."/>
            <person name="Iwayanagi T."/>
            <person name="Wagatsuma M."/>
            <person name="Shiratori A."/>
            <person name="Sudo H."/>
            <person name="Hosoiri T."/>
            <person name="Kaku Y."/>
            <person name="Kodaira H."/>
            <person name="Kondo H."/>
            <person name="Sugawara M."/>
            <person name="Takahashi M."/>
            <person name="Kanda K."/>
            <person name="Yokoi T."/>
            <person name="Furuya T."/>
            <person name="Kikkawa E."/>
            <person name="Omura Y."/>
            <person name="Abe K."/>
            <person name="Kamihara K."/>
            <person name="Katsuta N."/>
            <person name="Sato K."/>
            <person name="Tanikawa M."/>
            <person name="Yamazaki M."/>
            <person name="Ninomiya K."/>
            <person name="Ishibashi T."/>
            <person name="Yamashita H."/>
            <person name="Murakawa K."/>
            <person name="Fujimori K."/>
            <person name="Tanai H."/>
            <person name="Kimata M."/>
            <person name="Watanabe M."/>
            <person name="Hiraoka S."/>
            <person name="Chiba Y."/>
            <person name="Ishida S."/>
            <person name="Ono Y."/>
            <person name="Takiguchi S."/>
            <person name="Watanabe S."/>
            <person name="Yosida M."/>
            <person name="Hotuta T."/>
            <person name="Kusano J."/>
            <person name="Kanehori K."/>
            <person name="Takahashi-Fujii A."/>
            <person name="Hara H."/>
            <person name="Tanase T.-O."/>
            <person name="Nomura Y."/>
            <person name="Togiya S."/>
            <person name="Komai F."/>
            <person name="Hara R."/>
            <person name="Takeuchi K."/>
            <person name="Arita M."/>
            <person name="Imose N."/>
            <person name="Musashino K."/>
            <person name="Yuuki H."/>
            <person name="Oshima A."/>
            <person name="Sasaki N."/>
            <person name="Aotsuka S."/>
            <person name="Yoshikawa Y."/>
            <person name="Matsunawa H."/>
            <person name="Ichihara T."/>
            <person name="Shiohata N."/>
            <person name="Sano S."/>
            <person name="Moriya S."/>
            <person name="Momiyama H."/>
            <person name="Satoh N."/>
            <person name="Takami S."/>
            <person name="Terashima Y."/>
            <person name="Suzuki O."/>
            <person name="Nakagawa S."/>
            <person name="Senoh A."/>
            <person name="Mizoguchi H."/>
            <person name="Goto Y."/>
            <person name="Shimizu F."/>
            <person name="Wakebe H."/>
            <person name="Hishigaki H."/>
            <person name="Watanabe T."/>
            <person name="Sugiyama A."/>
            <person name="Takemoto M."/>
            <person name="Kawakami B."/>
            <person name="Yamazaki M."/>
            <person name="Watanabe K."/>
            <person name="Kumagai A."/>
            <person name="Itakura S."/>
            <person name="Fukuzumi Y."/>
            <person name="Fujimori Y."/>
            <person name="Komiyama M."/>
            <person name="Tashiro H."/>
            <person name="Tanigami A."/>
            <person name="Fujiwara T."/>
            <person name="Ono T."/>
            <person name="Yamada K."/>
            <person name="Fujii Y."/>
            <person name="Ozaki K."/>
            <person name="Hirao M."/>
            <person name="Ohmori Y."/>
            <person name="Kawabata A."/>
            <person name="Hikiji T."/>
            <person name="Kobatake N."/>
            <person name="Inagaki H."/>
            <person name="Ikema Y."/>
            <person name="Okamoto S."/>
            <person name="Okitani R."/>
            <person name="Kawakami T."/>
            <person name="Noguchi S."/>
            <person name="Itoh T."/>
            <person name="Shigeta K."/>
            <person name="Senba T."/>
            <person name="Matsumura K."/>
            <person name="Nakajima Y."/>
            <person name="Mizuno T."/>
            <person name="Morinaga M."/>
            <person name="Sasaki M."/>
            <person name="Togashi T."/>
            <person name="Oyama M."/>
            <person name="Hata H."/>
            <person name="Watanabe M."/>
            <person name="Komatsu T."/>
            <person name="Mizushima-Sugano J."/>
            <person name="Satoh T."/>
            <person name="Shirai Y."/>
            <person name="Takahashi Y."/>
            <person name="Nakagawa K."/>
            <person name="Okumura K."/>
            <person name="Nagase T."/>
            <person name="Nomura N."/>
            <person name="Kikuchi H."/>
            <person name="Masuho Y."/>
            <person name="Yamashita R."/>
            <person name="Nakai K."/>
            <person name="Yada T."/>
            <person name="Nakamura Y."/>
            <person name="Ohara O."/>
            <person name="Isogai T."/>
            <person name="Sugano S."/>
        </authorList>
    </citation>
    <scope>NUCLEOTIDE SEQUENCE [LARGE SCALE MRNA] OF 1-852 (ISOFORM 2)</scope>
    <scope>VARIANT THR-197</scope>
</reference>
<reference key="4">
    <citation type="journal article" date="2001" name="Genome Res.">
        <title>Towards a catalog of human genes and proteins: sequencing and analysis of 500 novel complete protein coding human cDNAs.</title>
        <authorList>
            <person name="Wiemann S."/>
            <person name="Weil B."/>
            <person name="Wellenreuther R."/>
            <person name="Gassenhuber J."/>
            <person name="Glassl S."/>
            <person name="Ansorge W."/>
            <person name="Boecher M."/>
            <person name="Bloecker H."/>
            <person name="Bauersachs S."/>
            <person name="Blum H."/>
            <person name="Lauber J."/>
            <person name="Duesterhoeft A."/>
            <person name="Beyer A."/>
            <person name="Koehrer K."/>
            <person name="Strack N."/>
            <person name="Mewes H.-W."/>
            <person name="Ottenwaelder B."/>
            <person name="Obermaier B."/>
            <person name="Tampe J."/>
            <person name="Heubner D."/>
            <person name="Wambutt R."/>
            <person name="Korn B."/>
            <person name="Klein M."/>
            <person name="Poustka A."/>
        </authorList>
    </citation>
    <scope>NUCLEOTIDE SEQUENCE [LARGE SCALE MRNA] OF 29-895 (ISOFORMS 1/2)</scope>
    <source>
        <tissue>Uterus</tissue>
    </source>
</reference>
<reference key="5">
    <citation type="journal article" date="1991" name="Proc. Natl. Acad. Sci. U.S.A.">
        <title>Expression of three mammalian cDNAs that interfere with RAS function in Saccharomyces cerevisiae.</title>
        <authorList>
            <person name="Colicelli J."/>
            <person name="Nicolette C."/>
            <person name="Birchmeier C."/>
            <person name="Rodgers L."/>
            <person name="Riggs M."/>
            <person name="Wigler M."/>
        </authorList>
    </citation>
    <scope>NUCLEOTIDE SEQUENCE [MRNA] OF 425-895 (ISOFORMS 1/2)</scope>
    <scope>INTERACTION WITH RAS</scope>
    <source>
        <tissue>Glial cell</tissue>
    </source>
</reference>
<reference key="6">
    <citation type="journal article" date="2008" name="Proteomics">
        <title>Large-scale phosphoproteome analysis of human liver tissue by enrichment and fractionation of phosphopeptides with strong anion exchange chromatography.</title>
        <authorList>
            <person name="Han G."/>
            <person name="Ye M."/>
            <person name="Zhou H."/>
            <person name="Jiang X."/>
            <person name="Feng S."/>
            <person name="Jiang X."/>
            <person name="Tian R."/>
            <person name="Wan D."/>
            <person name="Zou H."/>
            <person name="Gu J."/>
        </authorList>
    </citation>
    <scope>PHOSPHORYLATION [LARGE SCALE ANALYSIS] AT THR-509</scope>
    <scope>IDENTIFICATION BY MASS SPECTROMETRY [LARGE SCALE ANALYSIS]</scope>
    <source>
        <tissue>Liver</tissue>
    </source>
</reference>
<reference key="7">
    <citation type="journal article" date="2009" name="Am. J. Hum. Genet.">
        <title>RIN2 deficiency results in macrocephaly, alopecia, cutis laxa, and scoliosis: MACS syndrome.</title>
        <authorList>
            <person name="Basel-Vanagaite L."/>
            <person name="Sarig O."/>
            <person name="Hershkovitz D."/>
            <person name="Fuchs-Telem D."/>
            <person name="Rapaport D."/>
            <person name="Gat A."/>
            <person name="Isman G."/>
            <person name="Shirazi I."/>
            <person name="Shohat M."/>
            <person name="Enk C.D."/>
            <person name="Birk E."/>
            <person name="Kohlhase J."/>
            <person name="Matysiak-Scholze U."/>
            <person name="Maya I."/>
            <person name="Knopf C."/>
            <person name="Peffekoven A."/>
            <person name="Hennies H.-C."/>
            <person name="Bergman R."/>
            <person name="Horowitz M."/>
            <person name="Ishida-Yamamoto A."/>
            <person name="Sprecher E."/>
        </authorList>
    </citation>
    <scope>INVOLVEMENT IN MACS SYNDROME</scope>
</reference>
<reference key="8">
    <citation type="journal article" date="2014" name="J. Proteomics">
        <title>An enzyme assisted RP-RPLC approach for in-depth analysis of human liver phosphoproteome.</title>
        <authorList>
            <person name="Bian Y."/>
            <person name="Song C."/>
            <person name="Cheng K."/>
            <person name="Dong M."/>
            <person name="Wang F."/>
            <person name="Huang J."/>
            <person name="Sun D."/>
            <person name="Wang L."/>
            <person name="Ye M."/>
            <person name="Zou H."/>
        </authorList>
    </citation>
    <scope>IDENTIFICATION BY MASS SPECTROMETRY [LARGE SCALE ANALYSIS]</scope>
    <source>
        <tissue>Liver</tissue>
    </source>
</reference>
<comment type="function">
    <text evidence="6">Ras effector protein. May function as an upstream activator and/or downstream effector for RAB5B in endocytic pathway. May function as a guanine nucleotide exchange (GEF) of RAB5B, required for activating the RAB5 proteins by exchanging bound GDP for free GTP.</text>
</comment>
<comment type="subunit">
    <text evidence="6 8">Homotetramer; probably composed of anti-parallel linkage of two parallel dimers. Interacts with Ras. Interacts with RAB5B, with a much higher affinity for GTP-bound activated RAB5B. Does not interact with other members of the Rab family.</text>
</comment>
<comment type="subcellular location">
    <subcellularLocation>
        <location evidence="11">Cytoplasm</location>
    </subcellularLocation>
</comment>
<comment type="alternative products">
    <event type="alternative splicing"/>
    <isoform>
        <id>Q8WYP3-1</id>
        <name>1</name>
        <sequence type="displayed"/>
    </isoform>
    <isoform>
        <id>Q8WYP3-2</id>
        <name>2</name>
        <sequence type="described" ref="VSP_015145"/>
    </isoform>
</comment>
<comment type="tissue specificity">
    <text evidence="6">Widely expressed. Expressed in heart, kidney, lung placenta. Expressed at low level in skeletal muscle, spleen and peripheral blood.</text>
</comment>
<comment type="disease" evidence="9">
    <disease id="DI-02637">
        <name>MACS syndrome</name>
        <acronym>MACS</acronym>
        <description>A complex disorder of elastic tissue characterized by sagging skin and occasionally by life-threatening visceral complications.</description>
        <dbReference type="MIM" id="613075"/>
    </disease>
    <text>The disease is caused by variants affecting the gene represented in this entry.</text>
</comment>
<comment type="similarity">
    <text evidence="11">Belongs to the RIN (Ras interaction/interference) family.</text>
</comment>
<comment type="sequence caution" evidence="11">
    <conflict type="erroneous initiation">
        <sequence resource="EMBL-CDS" id="CAB66858"/>
    </conflict>
    <text>Truncated N-terminus.</text>
</comment>
<proteinExistence type="evidence at protein level"/>
<gene>
    <name type="primary">RIN2</name>
    <name type="synonym">RASSF4</name>
</gene>
<name>RIN2_HUMAN</name>
<feature type="chain" id="PRO_0000191320" description="Ras and Rab interactor 2">
    <location>
        <begin position="1"/>
        <end position="895"/>
    </location>
</feature>
<feature type="domain" description="SH2" evidence="3">
    <location>
        <begin position="97"/>
        <end position="190"/>
    </location>
</feature>
<feature type="domain" description="VPS9" evidence="4">
    <location>
        <begin position="618"/>
        <end position="757"/>
    </location>
</feature>
<feature type="domain" description="Ras-associating" evidence="2">
    <location>
        <begin position="787"/>
        <end position="878"/>
    </location>
</feature>
<feature type="region of interest" description="Disordered" evidence="5">
    <location>
        <begin position="284"/>
        <end position="361"/>
    </location>
</feature>
<feature type="region of interest" description="Disordered" evidence="5">
    <location>
        <begin position="373"/>
        <end position="442"/>
    </location>
</feature>
<feature type="region of interest" description="Disordered" evidence="5">
    <location>
        <begin position="460"/>
        <end position="481"/>
    </location>
</feature>
<feature type="compositionally biased region" description="Pro residues" evidence="5">
    <location>
        <begin position="306"/>
        <end position="315"/>
    </location>
</feature>
<feature type="compositionally biased region" description="Polar residues" evidence="5">
    <location>
        <begin position="328"/>
        <end position="338"/>
    </location>
</feature>
<feature type="compositionally biased region" description="Low complexity" evidence="5">
    <location>
        <begin position="430"/>
        <end position="441"/>
    </location>
</feature>
<feature type="modified residue" description="Phosphoserine" evidence="1">
    <location>
        <position position="366"/>
    </location>
</feature>
<feature type="modified residue" description="Phosphoserine" evidence="1">
    <location>
        <position position="501"/>
    </location>
</feature>
<feature type="modified residue" description="Phosphothreonine" evidence="12">
    <location>
        <position position="509"/>
    </location>
</feature>
<feature type="splice variant" id="VSP_015145" description="In isoform 2." evidence="10">
    <original>M</original>
    <variation>MLDSFSQESTLPFREARKRTSFQPVQVWRNFTASQTTESPACSGASLGEM</variation>
    <location>
        <position position="1"/>
    </location>
</feature>
<feature type="sequence variant" id="VAR_024694" description="In dbSNP:rs3803981." evidence="7">
    <original>S</original>
    <variation>T</variation>
    <location>
        <position position="197"/>
    </location>
</feature>
<feature type="sequence variant" id="VAR_052945" description="In dbSNP:rs199603.">
    <original>A</original>
    <variation>T</variation>
    <location>
        <position position="643"/>
    </location>
</feature>
<feature type="sequence conflict" description="In Ref. 3; AK094884." evidence="11" ref="3">
    <original>I</original>
    <variation>V</variation>
    <location>
        <position position="192"/>
    </location>
</feature>
<keyword id="KW-0025">Alternative splicing</keyword>
<keyword id="KW-0963">Cytoplasm</keyword>
<keyword id="KW-0254">Endocytosis</keyword>
<keyword id="KW-0343">GTPase activation</keyword>
<keyword id="KW-0597">Phosphoprotein</keyword>
<keyword id="KW-1267">Proteomics identification</keyword>
<keyword id="KW-1185">Reference proteome</keyword>
<keyword id="KW-0727">SH2 domain</keyword>
<dbReference type="EMBL" id="AB060339">
    <property type="protein sequence ID" value="BAB84317.1"/>
    <property type="molecule type" value="mRNA"/>
</dbReference>
<dbReference type="EMBL" id="AL049538">
    <property type="status" value="NOT_ANNOTATED_CDS"/>
    <property type="molecule type" value="Genomic_DNA"/>
</dbReference>
<dbReference type="EMBL" id="AL132821">
    <property type="status" value="NOT_ANNOTATED_CDS"/>
    <property type="molecule type" value="Genomic_DNA"/>
</dbReference>
<dbReference type="EMBL" id="AK094884">
    <property type="status" value="NOT_ANNOTATED_CDS"/>
    <property type="molecule type" value="mRNA"/>
</dbReference>
<dbReference type="EMBL" id="AL136924">
    <property type="protein sequence ID" value="CAB66858.1"/>
    <property type="status" value="ALT_INIT"/>
    <property type="molecule type" value="mRNA"/>
</dbReference>
<dbReference type="EMBL" id="M37190">
    <property type="protein sequence ID" value="AAA36553.1"/>
    <property type="molecule type" value="mRNA"/>
</dbReference>
<dbReference type="CCDS" id="CCDS93018.1">
    <molecule id="Q8WYP3-1"/>
</dbReference>
<dbReference type="PIR" id="B38637">
    <property type="entry name" value="B38637"/>
</dbReference>
<dbReference type="RefSeq" id="NP_001229510.1">
    <molecule id="Q8WYP3-2"/>
    <property type="nucleotide sequence ID" value="NM_001242581.2"/>
</dbReference>
<dbReference type="RefSeq" id="NP_061866.1">
    <molecule id="Q8WYP3-1"/>
    <property type="nucleotide sequence ID" value="NM_018993.4"/>
</dbReference>
<dbReference type="RefSeq" id="XP_005260788.1">
    <property type="nucleotide sequence ID" value="XM_005260731.2"/>
</dbReference>
<dbReference type="RefSeq" id="XP_006723637.1">
    <property type="nucleotide sequence ID" value="XM_006723574.3"/>
</dbReference>
<dbReference type="RefSeq" id="XP_006723638.1">
    <property type="nucleotide sequence ID" value="XM_006723575.3"/>
</dbReference>
<dbReference type="RefSeq" id="XP_006723640.1">
    <molecule id="Q8WYP3-1"/>
    <property type="nucleotide sequence ID" value="XM_006723577.2"/>
</dbReference>
<dbReference type="RefSeq" id="XP_011527559.1">
    <property type="nucleotide sequence ID" value="XM_011529257.1"/>
</dbReference>
<dbReference type="RefSeq" id="XP_011527560.1">
    <property type="nucleotide sequence ID" value="XM_011529258.2"/>
</dbReference>
<dbReference type="RefSeq" id="XP_016883376.1">
    <molecule id="Q8WYP3-2"/>
    <property type="nucleotide sequence ID" value="XM_017027887.2"/>
</dbReference>
<dbReference type="RefSeq" id="XP_016883377.1">
    <molecule id="Q8WYP3-2"/>
    <property type="nucleotide sequence ID" value="XM_017027888.2"/>
</dbReference>
<dbReference type="RefSeq" id="XP_016883379.1">
    <molecule id="Q8WYP3-1"/>
    <property type="nucleotide sequence ID" value="XM_017027890.2"/>
</dbReference>
<dbReference type="RefSeq" id="XP_047296165.1">
    <molecule id="Q8WYP3-2"/>
    <property type="nucleotide sequence ID" value="XM_047440209.1"/>
</dbReference>
<dbReference type="RefSeq" id="XP_047296166.1">
    <molecule id="Q8WYP3-2"/>
    <property type="nucleotide sequence ID" value="XM_047440210.1"/>
</dbReference>
<dbReference type="RefSeq" id="XP_047296167.1">
    <molecule id="Q8WYP3-2"/>
    <property type="nucleotide sequence ID" value="XM_047440211.1"/>
</dbReference>
<dbReference type="RefSeq" id="XP_047296168.1">
    <molecule id="Q8WYP3-2"/>
    <property type="nucleotide sequence ID" value="XM_047440212.1"/>
</dbReference>
<dbReference type="RefSeq" id="XP_047296169.1">
    <molecule id="Q8WYP3-2"/>
    <property type="nucleotide sequence ID" value="XM_047440213.1"/>
</dbReference>
<dbReference type="RefSeq" id="XP_047296170.1">
    <molecule id="Q8WYP3-1"/>
    <property type="nucleotide sequence ID" value="XM_047440214.1"/>
</dbReference>
<dbReference type="RefSeq" id="XP_047296171.1">
    <molecule id="Q8WYP3-1"/>
    <property type="nucleotide sequence ID" value="XM_047440215.1"/>
</dbReference>
<dbReference type="RefSeq" id="XP_054179508.1">
    <molecule id="Q8WYP3-2"/>
    <property type="nucleotide sequence ID" value="XM_054323533.1"/>
</dbReference>
<dbReference type="RefSeq" id="XP_054179509.1">
    <molecule id="Q8WYP3-2"/>
    <property type="nucleotide sequence ID" value="XM_054323534.1"/>
</dbReference>
<dbReference type="RefSeq" id="XP_054179510.1">
    <molecule id="Q8WYP3-2"/>
    <property type="nucleotide sequence ID" value="XM_054323535.1"/>
</dbReference>
<dbReference type="RefSeq" id="XP_054179511.1">
    <molecule id="Q8WYP3-2"/>
    <property type="nucleotide sequence ID" value="XM_054323536.1"/>
</dbReference>
<dbReference type="RefSeq" id="XP_054179513.1">
    <molecule id="Q8WYP3-1"/>
    <property type="nucleotide sequence ID" value="XM_054323538.1"/>
</dbReference>
<dbReference type="RefSeq" id="XP_054179514.1">
    <molecule id="Q8WYP3-1"/>
    <property type="nucleotide sequence ID" value="XM_054323539.1"/>
</dbReference>
<dbReference type="RefSeq" id="XP_054179515.1">
    <molecule id="Q8WYP3-1"/>
    <property type="nucleotide sequence ID" value="XM_054323540.1"/>
</dbReference>
<dbReference type="SMR" id="Q8WYP3"/>
<dbReference type="BioGRID" id="119960">
    <property type="interactions" value="26"/>
</dbReference>
<dbReference type="FunCoup" id="Q8WYP3">
    <property type="interactions" value="451"/>
</dbReference>
<dbReference type="IntAct" id="Q8WYP3">
    <property type="interactions" value="10"/>
</dbReference>
<dbReference type="MINT" id="Q8WYP3"/>
<dbReference type="STRING" id="9606.ENSP00000255006"/>
<dbReference type="iPTMnet" id="Q8WYP3"/>
<dbReference type="PhosphoSitePlus" id="Q8WYP3"/>
<dbReference type="BioMuta" id="RIN2"/>
<dbReference type="DMDM" id="28201876"/>
<dbReference type="jPOST" id="Q8WYP3"/>
<dbReference type="MassIVE" id="Q8WYP3"/>
<dbReference type="PaxDb" id="9606-ENSP00000255006"/>
<dbReference type="PeptideAtlas" id="Q8WYP3"/>
<dbReference type="ProteomicsDB" id="75179">
    <molecule id="Q8WYP3-1"/>
</dbReference>
<dbReference type="ProteomicsDB" id="75180">
    <molecule id="Q8WYP3-2"/>
</dbReference>
<dbReference type="Antibodypedia" id="24653">
    <property type="antibodies" value="76 antibodies from 20 providers"/>
</dbReference>
<dbReference type="DNASU" id="54453"/>
<dbReference type="Ensembl" id="ENST00000255006.12">
    <molecule id="Q8WYP3-1"/>
    <property type="protein sequence ID" value="ENSP00000255006.7"/>
    <property type="gene ID" value="ENSG00000132669.14"/>
</dbReference>
<dbReference type="Ensembl" id="ENST00000648440.1">
    <molecule id="Q8WYP3-1"/>
    <property type="protein sequence ID" value="ENSP00000498085.1"/>
    <property type="gene ID" value="ENSG00000132669.14"/>
</dbReference>
<dbReference type="GeneID" id="54453"/>
<dbReference type="KEGG" id="hsa:54453"/>
<dbReference type="MANE-Select" id="ENST00000255006.12">
    <property type="protein sequence ID" value="ENSP00000255006.7"/>
    <property type="RefSeq nucleotide sequence ID" value="NM_018993.4"/>
    <property type="RefSeq protein sequence ID" value="NP_061866.1"/>
</dbReference>
<dbReference type="UCSC" id="uc002wro.3">
    <molecule id="Q8WYP3-1"/>
    <property type="organism name" value="human"/>
</dbReference>
<dbReference type="AGR" id="HGNC:18750"/>
<dbReference type="CTD" id="54453"/>
<dbReference type="DisGeNET" id="54453"/>
<dbReference type="GeneCards" id="RIN2"/>
<dbReference type="HGNC" id="HGNC:18750">
    <property type="gene designation" value="RIN2"/>
</dbReference>
<dbReference type="HPA" id="ENSG00000132669">
    <property type="expression patterns" value="Low tissue specificity"/>
</dbReference>
<dbReference type="MalaCards" id="RIN2"/>
<dbReference type="MIM" id="610222">
    <property type="type" value="gene"/>
</dbReference>
<dbReference type="MIM" id="613075">
    <property type="type" value="phenotype"/>
</dbReference>
<dbReference type="neXtProt" id="NX_Q8WYP3"/>
<dbReference type="OpenTargets" id="ENSG00000132669"/>
<dbReference type="Orphanet" id="217335">
    <property type="disease" value="RIN2 syndrome"/>
</dbReference>
<dbReference type="PharmGKB" id="PA38672"/>
<dbReference type="VEuPathDB" id="HostDB:ENSG00000132669"/>
<dbReference type="eggNOG" id="KOG2320">
    <property type="taxonomic scope" value="Eukaryota"/>
</dbReference>
<dbReference type="GeneTree" id="ENSGT00940000154866"/>
<dbReference type="HOGENOM" id="CLU_011829_1_0_1"/>
<dbReference type="InParanoid" id="Q8WYP3"/>
<dbReference type="OMA" id="KVMGKNT"/>
<dbReference type="OrthoDB" id="21085at2759"/>
<dbReference type="PAN-GO" id="Q8WYP3">
    <property type="GO annotations" value="4 GO annotations based on evolutionary models"/>
</dbReference>
<dbReference type="PhylomeDB" id="Q8WYP3"/>
<dbReference type="TreeFam" id="TF331067"/>
<dbReference type="PathwayCommons" id="Q8WYP3"/>
<dbReference type="Reactome" id="R-HSA-8876198">
    <property type="pathway name" value="RAB GEFs exchange GTP for GDP on RABs"/>
</dbReference>
<dbReference type="SignaLink" id="Q8WYP3"/>
<dbReference type="BioGRID-ORCS" id="54453">
    <property type="hits" value="18 hits in 1153 CRISPR screens"/>
</dbReference>
<dbReference type="ChiTaRS" id="RIN2">
    <property type="organism name" value="human"/>
</dbReference>
<dbReference type="GenomeRNAi" id="54453"/>
<dbReference type="Pharos" id="Q8WYP3">
    <property type="development level" value="Tbio"/>
</dbReference>
<dbReference type="PRO" id="PR:Q8WYP3"/>
<dbReference type="Proteomes" id="UP000005640">
    <property type="component" value="Chromosome 20"/>
</dbReference>
<dbReference type="RNAct" id="Q8WYP3">
    <property type="molecule type" value="protein"/>
</dbReference>
<dbReference type="Bgee" id="ENSG00000132669">
    <property type="expression patterns" value="Expressed in choroid plexus epithelium and 206 other cell types or tissues"/>
</dbReference>
<dbReference type="ExpressionAtlas" id="Q8WYP3">
    <property type="expression patterns" value="baseline and differential"/>
</dbReference>
<dbReference type="GO" id="GO:0005829">
    <property type="term" value="C:cytosol"/>
    <property type="evidence" value="ECO:0000318"/>
    <property type="project" value="GO_Central"/>
</dbReference>
<dbReference type="GO" id="GO:0030139">
    <property type="term" value="C:endocytic vesicle"/>
    <property type="evidence" value="ECO:0000318"/>
    <property type="project" value="GO_Central"/>
</dbReference>
<dbReference type="GO" id="GO:0005096">
    <property type="term" value="F:GTPase activator activity"/>
    <property type="evidence" value="ECO:0007669"/>
    <property type="project" value="UniProtKB-KW"/>
</dbReference>
<dbReference type="GO" id="GO:0030695">
    <property type="term" value="F:GTPase regulator activity"/>
    <property type="evidence" value="ECO:0000303"/>
    <property type="project" value="UniProtKB"/>
</dbReference>
<dbReference type="GO" id="GO:0005085">
    <property type="term" value="F:guanyl-nucleotide exchange factor activity"/>
    <property type="evidence" value="ECO:0000318"/>
    <property type="project" value="GO_Central"/>
</dbReference>
<dbReference type="GO" id="GO:0031267">
    <property type="term" value="F:small GTPase binding"/>
    <property type="evidence" value="ECO:0000318"/>
    <property type="project" value="GO_Central"/>
</dbReference>
<dbReference type="GO" id="GO:0006897">
    <property type="term" value="P:endocytosis"/>
    <property type="evidence" value="ECO:0007669"/>
    <property type="project" value="UniProtKB-KW"/>
</dbReference>
<dbReference type="GO" id="GO:0010595">
    <property type="term" value="P:positive regulation of endothelial cell migration"/>
    <property type="evidence" value="ECO:0000315"/>
    <property type="project" value="CACAO"/>
</dbReference>
<dbReference type="GO" id="GO:1904906">
    <property type="term" value="P:positive regulation of endothelial cell-matrix adhesion via fibronectin"/>
    <property type="evidence" value="ECO:0000315"/>
    <property type="project" value="CACAO"/>
</dbReference>
<dbReference type="GO" id="GO:2001214">
    <property type="term" value="P:positive regulation of vasculogenesis"/>
    <property type="evidence" value="ECO:0000315"/>
    <property type="project" value="CACAO"/>
</dbReference>
<dbReference type="GO" id="GO:0007264">
    <property type="term" value="P:small GTPase-mediated signal transduction"/>
    <property type="evidence" value="ECO:0000303"/>
    <property type="project" value="UniProtKB"/>
</dbReference>
<dbReference type="CDD" id="cd16131">
    <property type="entry name" value="RA_Rin2"/>
    <property type="match status" value="1"/>
</dbReference>
<dbReference type="CDD" id="cd10394">
    <property type="entry name" value="SH2_RIN2"/>
    <property type="match status" value="1"/>
</dbReference>
<dbReference type="FunFam" id="1.20.1050.80:FF:000002">
    <property type="entry name" value="Ras and Rab interactor 2"/>
    <property type="match status" value="1"/>
</dbReference>
<dbReference type="FunFam" id="3.30.505.10:FF:000052">
    <property type="entry name" value="Ras and Rab interactor 2"/>
    <property type="match status" value="1"/>
</dbReference>
<dbReference type="Gene3D" id="3.30.505.10">
    <property type="entry name" value="SH2 domain"/>
    <property type="match status" value="1"/>
</dbReference>
<dbReference type="Gene3D" id="1.20.1050.80">
    <property type="entry name" value="VPS9 domain"/>
    <property type="match status" value="1"/>
</dbReference>
<dbReference type="InterPro" id="IPR000159">
    <property type="entry name" value="RA_dom"/>
</dbReference>
<dbReference type="InterPro" id="IPR035868">
    <property type="entry name" value="RIN2_SH2"/>
</dbReference>
<dbReference type="InterPro" id="IPR000980">
    <property type="entry name" value="SH2"/>
</dbReference>
<dbReference type="InterPro" id="IPR036860">
    <property type="entry name" value="SH2_dom_sf"/>
</dbReference>
<dbReference type="InterPro" id="IPR029071">
    <property type="entry name" value="Ubiquitin-like_domsf"/>
</dbReference>
<dbReference type="InterPro" id="IPR003123">
    <property type="entry name" value="VPS9"/>
</dbReference>
<dbReference type="InterPro" id="IPR045046">
    <property type="entry name" value="Vps9-like"/>
</dbReference>
<dbReference type="InterPro" id="IPR037191">
    <property type="entry name" value="VPS9_dom_sf"/>
</dbReference>
<dbReference type="PANTHER" id="PTHR23101">
    <property type="entry name" value="RAB GDP/GTP EXCHANGE FACTOR"/>
    <property type="match status" value="1"/>
</dbReference>
<dbReference type="PANTHER" id="PTHR23101:SF51">
    <property type="entry name" value="RAS AND RAB INTERACTOR 2"/>
    <property type="match status" value="1"/>
</dbReference>
<dbReference type="Pfam" id="PF00788">
    <property type="entry name" value="RA"/>
    <property type="match status" value="1"/>
</dbReference>
<dbReference type="Pfam" id="PF23268">
    <property type="entry name" value="RIN1"/>
    <property type="match status" value="1"/>
</dbReference>
<dbReference type="Pfam" id="PF02204">
    <property type="entry name" value="VPS9"/>
    <property type="match status" value="1"/>
</dbReference>
<dbReference type="SMART" id="SM00314">
    <property type="entry name" value="RA"/>
    <property type="match status" value="1"/>
</dbReference>
<dbReference type="SMART" id="SM00167">
    <property type="entry name" value="VPS9"/>
    <property type="match status" value="1"/>
</dbReference>
<dbReference type="SUPFAM" id="SSF55550">
    <property type="entry name" value="SH2 domain"/>
    <property type="match status" value="1"/>
</dbReference>
<dbReference type="SUPFAM" id="SSF54236">
    <property type="entry name" value="Ubiquitin-like"/>
    <property type="match status" value="1"/>
</dbReference>
<dbReference type="SUPFAM" id="SSF109993">
    <property type="entry name" value="VPS9 domain"/>
    <property type="match status" value="1"/>
</dbReference>
<dbReference type="PROSITE" id="PS50200">
    <property type="entry name" value="RA"/>
    <property type="match status" value="1"/>
</dbReference>
<dbReference type="PROSITE" id="PS50001">
    <property type="entry name" value="SH2"/>
    <property type="match status" value="1"/>
</dbReference>
<dbReference type="PROSITE" id="PS51205">
    <property type="entry name" value="VPS9"/>
    <property type="match status" value="1"/>
</dbReference>